<evidence type="ECO:0000255" key="1">
    <source>
        <dbReference type="HAMAP-Rule" id="MF_01037"/>
    </source>
</evidence>
<sequence>MERVNVVGAGLAGSEAAWTLLRLGVPVRLFEMRPKRMTPAHGTDRFAEIVCSNSLGGEGETNAKGLLQAEMRRAGSLVMEAADLARVPAGGALAVDREEFSGYITERLRGHPLLEVVREEVREIPPGITVLATGPLTSEALAEALKRRFGDHFLAYYDAASPIVLYESIDLTKCFRAGRYGQSADYLNCPMTEEEYRRFHQALLEAQRHTPHDWEKLEFFEACVPVEELARRGYQTLLFGPMKPVGLVDPRTGKEPFAVVQLRQEDKAGRMWSLVGFQTGLKWPEQKRLIQMIPGLENAEIVRYGVMHRNTYLNAPRLLGETLEFREAEGLYAAGVLAGVEGYLESAATGFLAGLNAARRALGLPPVAPPEESMLGGLVRYLATANPEGFQPMYANWGLVPPVEGRMGKKEKRQAMYRRGLEAFSAWLSGLNPPLPRPEAALV</sequence>
<proteinExistence type="inferred from homology"/>
<accession>Q72IQ5</accession>
<organism>
    <name type="scientific">Thermus thermophilus (strain ATCC BAA-163 / DSM 7039 / HB27)</name>
    <dbReference type="NCBI Taxonomy" id="262724"/>
    <lineage>
        <taxon>Bacteria</taxon>
        <taxon>Thermotogati</taxon>
        <taxon>Deinococcota</taxon>
        <taxon>Deinococci</taxon>
        <taxon>Thermales</taxon>
        <taxon>Thermaceae</taxon>
        <taxon>Thermus</taxon>
    </lineage>
</organism>
<dbReference type="EC" id="2.1.1.74" evidence="1"/>
<dbReference type="EMBL" id="AE017221">
    <property type="protein sequence ID" value="AAS81419.1"/>
    <property type="molecule type" value="Genomic_DNA"/>
</dbReference>
<dbReference type="RefSeq" id="WP_011173493.1">
    <property type="nucleotide sequence ID" value="NC_005835.1"/>
</dbReference>
<dbReference type="SMR" id="Q72IQ5"/>
<dbReference type="KEGG" id="tth:TT_C1077"/>
<dbReference type="eggNOG" id="COG1206">
    <property type="taxonomic scope" value="Bacteria"/>
</dbReference>
<dbReference type="HOGENOM" id="CLU_033057_1_0_0"/>
<dbReference type="OrthoDB" id="9803114at2"/>
<dbReference type="Proteomes" id="UP000000592">
    <property type="component" value="Chromosome"/>
</dbReference>
<dbReference type="GO" id="GO:0005829">
    <property type="term" value="C:cytosol"/>
    <property type="evidence" value="ECO:0007669"/>
    <property type="project" value="TreeGrafter"/>
</dbReference>
<dbReference type="GO" id="GO:0050660">
    <property type="term" value="F:flavin adenine dinucleotide binding"/>
    <property type="evidence" value="ECO:0007669"/>
    <property type="project" value="UniProtKB-UniRule"/>
</dbReference>
<dbReference type="GO" id="GO:0047151">
    <property type="term" value="F:tRNA (uracil(54)-C5)-methyltransferase activity, 5,10-methylenetetrahydrofolate-dependent"/>
    <property type="evidence" value="ECO:0007669"/>
    <property type="project" value="UniProtKB-UniRule"/>
</dbReference>
<dbReference type="GO" id="GO:0030488">
    <property type="term" value="P:tRNA methylation"/>
    <property type="evidence" value="ECO:0007669"/>
    <property type="project" value="TreeGrafter"/>
</dbReference>
<dbReference type="GO" id="GO:0002098">
    <property type="term" value="P:tRNA wobble uridine modification"/>
    <property type="evidence" value="ECO:0007669"/>
    <property type="project" value="TreeGrafter"/>
</dbReference>
<dbReference type="Gene3D" id="3.50.50.60">
    <property type="entry name" value="FAD/NAD(P)-binding domain"/>
    <property type="match status" value="2"/>
</dbReference>
<dbReference type="HAMAP" id="MF_01037">
    <property type="entry name" value="TrmFO"/>
    <property type="match status" value="1"/>
</dbReference>
<dbReference type="InterPro" id="IPR036188">
    <property type="entry name" value="FAD/NAD-bd_sf"/>
</dbReference>
<dbReference type="InterPro" id="IPR002218">
    <property type="entry name" value="MnmG-rel"/>
</dbReference>
<dbReference type="InterPro" id="IPR020595">
    <property type="entry name" value="MnmG-rel_CS"/>
</dbReference>
<dbReference type="InterPro" id="IPR040131">
    <property type="entry name" value="MnmG_N"/>
</dbReference>
<dbReference type="InterPro" id="IPR004417">
    <property type="entry name" value="TrmFO"/>
</dbReference>
<dbReference type="NCBIfam" id="TIGR00137">
    <property type="entry name" value="gid_trmFO"/>
    <property type="match status" value="1"/>
</dbReference>
<dbReference type="NCBIfam" id="NF003739">
    <property type="entry name" value="PRK05335.1"/>
    <property type="match status" value="1"/>
</dbReference>
<dbReference type="PANTHER" id="PTHR11806">
    <property type="entry name" value="GLUCOSE INHIBITED DIVISION PROTEIN A"/>
    <property type="match status" value="1"/>
</dbReference>
<dbReference type="PANTHER" id="PTHR11806:SF2">
    <property type="entry name" value="METHYLENETETRAHYDROFOLATE--TRNA-(URACIL-5-)-METHYLTRANSFERASE TRMFO"/>
    <property type="match status" value="1"/>
</dbReference>
<dbReference type="Pfam" id="PF01134">
    <property type="entry name" value="GIDA"/>
    <property type="match status" value="1"/>
</dbReference>
<dbReference type="SUPFAM" id="SSF51905">
    <property type="entry name" value="FAD/NAD(P)-binding domain"/>
    <property type="match status" value="1"/>
</dbReference>
<dbReference type="PROSITE" id="PS01281">
    <property type="entry name" value="GIDA_2"/>
    <property type="match status" value="1"/>
</dbReference>
<keyword id="KW-0963">Cytoplasm</keyword>
<keyword id="KW-0274">FAD</keyword>
<keyword id="KW-0285">Flavoprotein</keyword>
<keyword id="KW-0489">Methyltransferase</keyword>
<keyword id="KW-0520">NAD</keyword>
<keyword id="KW-0521">NADP</keyword>
<keyword id="KW-0808">Transferase</keyword>
<keyword id="KW-0819">tRNA processing</keyword>
<gene>
    <name evidence="1" type="primary">trmFO</name>
    <name type="ordered locus">TT_C1077</name>
</gene>
<reference key="1">
    <citation type="journal article" date="2004" name="Nat. Biotechnol.">
        <title>The genome sequence of the extreme thermophile Thermus thermophilus.</title>
        <authorList>
            <person name="Henne A."/>
            <person name="Brueggemann H."/>
            <person name="Raasch C."/>
            <person name="Wiezer A."/>
            <person name="Hartsch T."/>
            <person name="Liesegang H."/>
            <person name="Johann A."/>
            <person name="Lienard T."/>
            <person name="Gohl O."/>
            <person name="Martinez-Arias R."/>
            <person name="Jacobi C."/>
            <person name="Starkuviene V."/>
            <person name="Schlenczeck S."/>
            <person name="Dencker S."/>
            <person name="Huber R."/>
            <person name="Klenk H.-P."/>
            <person name="Kramer W."/>
            <person name="Merkl R."/>
            <person name="Gottschalk G."/>
            <person name="Fritz H.-J."/>
        </authorList>
    </citation>
    <scope>NUCLEOTIDE SEQUENCE [LARGE SCALE GENOMIC DNA]</scope>
    <source>
        <strain>ATCC BAA-163 / DSM 7039 / HB27</strain>
    </source>
</reference>
<feature type="chain" id="PRO_0000346419" description="Methylenetetrahydrofolate--tRNA-(uracil-5-)-methyltransferase TrmFO">
    <location>
        <begin position="1"/>
        <end position="443"/>
    </location>
</feature>
<feature type="binding site" evidence="1">
    <location>
        <begin position="8"/>
        <end position="13"/>
    </location>
    <ligand>
        <name>FAD</name>
        <dbReference type="ChEBI" id="CHEBI:57692"/>
    </ligand>
</feature>
<comment type="function">
    <text evidence="1">Catalyzes the folate-dependent formation of 5-methyl-uridine at position 54 (M-5-U54) in all tRNAs.</text>
</comment>
<comment type="catalytic activity">
    <reaction evidence="1">
        <text>uridine(54) in tRNA + (6R)-5,10-methylene-5,6,7,8-tetrahydrofolate + NADH + H(+) = 5-methyluridine(54) in tRNA + (6S)-5,6,7,8-tetrahydrofolate + NAD(+)</text>
        <dbReference type="Rhea" id="RHEA:16873"/>
        <dbReference type="Rhea" id="RHEA-COMP:10167"/>
        <dbReference type="Rhea" id="RHEA-COMP:10193"/>
        <dbReference type="ChEBI" id="CHEBI:15378"/>
        <dbReference type="ChEBI" id="CHEBI:15636"/>
        <dbReference type="ChEBI" id="CHEBI:57453"/>
        <dbReference type="ChEBI" id="CHEBI:57540"/>
        <dbReference type="ChEBI" id="CHEBI:57945"/>
        <dbReference type="ChEBI" id="CHEBI:65315"/>
        <dbReference type="ChEBI" id="CHEBI:74447"/>
        <dbReference type="EC" id="2.1.1.74"/>
    </reaction>
</comment>
<comment type="catalytic activity">
    <reaction evidence="1">
        <text>uridine(54) in tRNA + (6R)-5,10-methylene-5,6,7,8-tetrahydrofolate + NADPH + H(+) = 5-methyluridine(54) in tRNA + (6S)-5,6,7,8-tetrahydrofolate + NADP(+)</text>
        <dbReference type="Rhea" id="RHEA:62372"/>
        <dbReference type="Rhea" id="RHEA-COMP:10167"/>
        <dbReference type="Rhea" id="RHEA-COMP:10193"/>
        <dbReference type="ChEBI" id="CHEBI:15378"/>
        <dbReference type="ChEBI" id="CHEBI:15636"/>
        <dbReference type="ChEBI" id="CHEBI:57453"/>
        <dbReference type="ChEBI" id="CHEBI:57783"/>
        <dbReference type="ChEBI" id="CHEBI:58349"/>
        <dbReference type="ChEBI" id="CHEBI:65315"/>
        <dbReference type="ChEBI" id="CHEBI:74447"/>
        <dbReference type="EC" id="2.1.1.74"/>
    </reaction>
</comment>
<comment type="cofactor">
    <cofactor evidence="1">
        <name>FAD</name>
        <dbReference type="ChEBI" id="CHEBI:57692"/>
    </cofactor>
</comment>
<comment type="subcellular location">
    <subcellularLocation>
        <location evidence="1">Cytoplasm</location>
    </subcellularLocation>
</comment>
<comment type="similarity">
    <text evidence="1">Belongs to the MnmG family. TrmFO subfamily.</text>
</comment>
<name>TRMFO_THET2</name>
<protein>
    <recommendedName>
        <fullName evidence="1">Methylenetetrahydrofolate--tRNA-(uracil-5-)-methyltransferase TrmFO</fullName>
        <ecNumber evidence="1">2.1.1.74</ecNumber>
    </recommendedName>
    <alternativeName>
        <fullName evidence="1">Folate-dependent tRNA (uracil-5-)-methyltransferase</fullName>
    </alternativeName>
    <alternativeName>
        <fullName evidence="1">Folate-dependent tRNA(M-5-U54)-methyltransferase</fullName>
    </alternativeName>
</protein>